<comment type="function">
    <text evidence="1">Catalyzes the cyclization of GTP to (8S)-3',8-cyclo-7,8-dihydroguanosine 5'-triphosphate.</text>
</comment>
<comment type="catalytic activity">
    <reaction evidence="1">
        <text>GTP + AH2 + S-adenosyl-L-methionine = (8S)-3',8-cyclo-7,8-dihydroguanosine 5'-triphosphate + 5'-deoxyadenosine + L-methionine + A + H(+)</text>
        <dbReference type="Rhea" id="RHEA:49576"/>
        <dbReference type="ChEBI" id="CHEBI:13193"/>
        <dbReference type="ChEBI" id="CHEBI:15378"/>
        <dbReference type="ChEBI" id="CHEBI:17319"/>
        <dbReference type="ChEBI" id="CHEBI:17499"/>
        <dbReference type="ChEBI" id="CHEBI:37565"/>
        <dbReference type="ChEBI" id="CHEBI:57844"/>
        <dbReference type="ChEBI" id="CHEBI:59789"/>
        <dbReference type="ChEBI" id="CHEBI:131766"/>
        <dbReference type="EC" id="4.1.99.22"/>
    </reaction>
</comment>
<comment type="cofactor">
    <cofactor evidence="1">
        <name>[4Fe-4S] cluster</name>
        <dbReference type="ChEBI" id="CHEBI:49883"/>
    </cofactor>
    <text evidence="1">Binds 2 [4Fe-4S] clusters. Binds 1 [4Fe-4S] cluster coordinated with 3 cysteines and an exchangeable S-adenosyl-L-methionine and 1 [4Fe-4S] cluster coordinated with 3 cysteines and the GTP-derived substrate.</text>
</comment>
<comment type="pathway">
    <text evidence="1">Cofactor biosynthesis; molybdopterin biosynthesis.</text>
</comment>
<comment type="subunit">
    <text evidence="1">Monomer and homodimer.</text>
</comment>
<comment type="similarity">
    <text evidence="1">Belongs to the radical SAM superfamily. MoaA family.</text>
</comment>
<keyword id="KW-0004">4Fe-4S</keyword>
<keyword id="KW-0342">GTP-binding</keyword>
<keyword id="KW-0408">Iron</keyword>
<keyword id="KW-0411">Iron-sulfur</keyword>
<keyword id="KW-0456">Lyase</keyword>
<keyword id="KW-0479">Metal-binding</keyword>
<keyword id="KW-0501">Molybdenum cofactor biosynthesis</keyword>
<keyword id="KW-0547">Nucleotide-binding</keyword>
<keyword id="KW-0949">S-adenosyl-L-methionine</keyword>
<gene>
    <name evidence="1" type="primary">moaA</name>
    <name type="ordered locus">cgR_1276</name>
</gene>
<evidence type="ECO:0000255" key="1">
    <source>
        <dbReference type="HAMAP-Rule" id="MF_01225"/>
    </source>
</evidence>
<evidence type="ECO:0000255" key="2">
    <source>
        <dbReference type="PROSITE-ProRule" id="PRU01266"/>
    </source>
</evidence>
<evidence type="ECO:0000256" key="3">
    <source>
        <dbReference type="SAM" id="MobiDB-lite"/>
    </source>
</evidence>
<feature type="chain" id="PRO_1000054190" description="GTP 3',8-cyclase">
    <location>
        <begin position="1"/>
        <end position="377"/>
    </location>
</feature>
<feature type="domain" description="Radical SAM core" evidence="2">
    <location>
        <begin position="45"/>
        <end position="271"/>
    </location>
</feature>
<feature type="region of interest" description="Disordered" evidence="3">
    <location>
        <begin position="1"/>
        <end position="29"/>
    </location>
</feature>
<feature type="binding site" evidence="1">
    <location>
        <position position="54"/>
    </location>
    <ligand>
        <name>GTP</name>
        <dbReference type="ChEBI" id="CHEBI:37565"/>
    </ligand>
</feature>
<feature type="binding site" evidence="1">
    <location>
        <position position="61"/>
    </location>
    <ligand>
        <name>[4Fe-4S] cluster</name>
        <dbReference type="ChEBI" id="CHEBI:49883"/>
        <label>1</label>
        <note>4Fe-4S-S-AdoMet</note>
    </ligand>
</feature>
<feature type="binding site" evidence="1">
    <location>
        <position position="65"/>
    </location>
    <ligand>
        <name>[4Fe-4S] cluster</name>
        <dbReference type="ChEBI" id="CHEBI:49883"/>
        <label>1</label>
        <note>4Fe-4S-S-AdoMet</note>
    </ligand>
</feature>
<feature type="binding site" evidence="1">
    <location>
        <position position="67"/>
    </location>
    <ligand>
        <name>S-adenosyl-L-methionine</name>
        <dbReference type="ChEBI" id="CHEBI:59789"/>
    </ligand>
</feature>
<feature type="binding site" evidence="1">
    <location>
        <position position="68"/>
    </location>
    <ligand>
        <name>[4Fe-4S] cluster</name>
        <dbReference type="ChEBI" id="CHEBI:49883"/>
        <label>1</label>
        <note>4Fe-4S-S-AdoMet</note>
    </ligand>
</feature>
<feature type="binding site" evidence="1">
    <location>
        <position position="105"/>
    </location>
    <ligand>
        <name>GTP</name>
        <dbReference type="ChEBI" id="CHEBI:37565"/>
    </ligand>
</feature>
<feature type="binding site" evidence="1">
    <location>
        <position position="109"/>
    </location>
    <ligand>
        <name>S-adenosyl-L-methionine</name>
        <dbReference type="ChEBI" id="CHEBI:59789"/>
    </ligand>
</feature>
<feature type="binding site" evidence="1">
    <location>
        <position position="140"/>
    </location>
    <ligand>
        <name>GTP</name>
        <dbReference type="ChEBI" id="CHEBI:37565"/>
    </ligand>
</feature>
<feature type="binding site" evidence="1">
    <location>
        <position position="164"/>
    </location>
    <ligand>
        <name>S-adenosyl-L-methionine</name>
        <dbReference type="ChEBI" id="CHEBI:59789"/>
    </ligand>
</feature>
<feature type="binding site" evidence="1">
    <location>
        <position position="201"/>
    </location>
    <ligand>
        <name>GTP</name>
        <dbReference type="ChEBI" id="CHEBI:37565"/>
    </ligand>
</feature>
<feature type="binding site" evidence="1">
    <location>
        <position position="235"/>
    </location>
    <ligand>
        <name>S-adenosyl-L-methionine</name>
        <dbReference type="ChEBI" id="CHEBI:59789"/>
    </ligand>
</feature>
<feature type="binding site" evidence="1">
    <location>
        <position position="304"/>
    </location>
    <ligand>
        <name>[4Fe-4S] cluster</name>
        <dbReference type="ChEBI" id="CHEBI:49883"/>
        <label>2</label>
        <note>4Fe-4S-substrate</note>
    </ligand>
</feature>
<feature type="binding site" evidence="1">
    <location>
        <position position="307"/>
    </location>
    <ligand>
        <name>[4Fe-4S] cluster</name>
        <dbReference type="ChEBI" id="CHEBI:49883"/>
        <label>2</label>
        <note>4Fe-4S-substrate</note>
    </ligand>
</feature>
<feature type="binding site" evidence="1">
    <location>
        <begin position="309"/>
        <end position="311"/>
    </location>
    <ligand>
        <name>GTP</name>
        <dbReference type="ChEBI" id="CHEBI:37565"/>
    </ligand>
</feature>
<feature type="binding site" evidence="1">
    <location>
        <position position="321"/>
    </location>
    <ligand>
        <name>[4Fe-4S] cluster</name>
        <dbReference type="ChEBI" id="CHEBI:49883"/>
        <label>2</label>
        <note>4Fe-4S-substrate</note>
    </ligand>
</feature>
<dbReference type="EC" id="4.1.99.22" evidence="1"/>
<dbReference type="EMBL" id="AP009044">
    <property type="protein sequence ID" value="BAF54255.1"/>
    <property type="molecule type" value="Genomic_DNA"/>
</dbReference>
<dbReference type="RefSeq" id="WP_011897095.1">
    <property type="nucleotide sequence ID" value="NC_009342.1"/>
</dbReference>
<dbReference type="SMR" id="A4QDF8"/>
<dbReference type="KEGG" id="cgt:cgR_1276"/>
<dbReference type="HOGENOM" id="CLU_009273_0_1_11"/>
<dbReference type="PhylomeDB" id="A4QDF8"/>
<dbReference type="UniPathway" id="UPA00344"/>
<dbReference type="Proteomes" id="UP000006698">
    <property type="component" value="Chromosome"/>
</dbReference>
<dbReference type="GO" id="GO:0051539">
    <property type="term" value="F:4 iron, 4 sulfur cluster binding"/>
    <property type="evidence" value="ECO:0007669"/>
    <property type="project" value="UniProtKB-UniRule"/>
</dbReference>
<dbReference type="GO" id="GO:0061799">
    <property type="term" value="F:cyclic pyranopterin monophosphate synthase activity"/>
    <property type="evidence" value="ECO:0007669"/>
    <property type="project" value="TreeGrafter"/>
</dbReference>
<dbReference type="GO" id="GO:0061798">
    <property type="term" value="F:GTP 3',8'-cyclase activity"/>
    <property type="evidence" value="ECO:0007669"/>
    <property type="project" value="UniProtKB-UniRule"/>
</dbReference>
<dbReference type="GO" id="GO:0005525">
    <property type="term" value="F:GTP binding"/>
    <property type="evidence" value="ECO:0007669"/>
    <property type="project" value="UniProtKB-UniRule"/>
</dbReference>
<dbReference type="GO" id="GO:0046872">
    <property type="term" value="F:metal ion binding"/>
    <property type="evidence" value="ECO:0007669"/>
    <property type="project" value="UniProtKB-KW"/>
</dbReference>
<dbReference type="GO" id="GO:1904047">
    <property type="term" value="F:S-adenosyl-L-methionine binding"/>
    <property type="evidence" value="ECO:0007669"/>
    <property type="project" value="UniProtKB-UniRule"/>
</dbReference>
<dbReference type="GO" id="GO:0006777">
    <property type="term" value="P:Mo-molybdopterin cofactor biosynthetic process"/>
    <property type="evidence" value="ECO:0007669"/>
    <property type="project" value="UniProtKB-UniRule"/>
</dbReference>
<dbReference type="CDD" id="cd01335">
    <property type="entry name" value="Radical_SAM"/>
    <property type="match status" value="1"/>
</dbReference>
<dbReference type="CDD" id="cd21117">
    <property type="entry name" value="Twitch_MoaA"/>
    <property type="match status" value="1"/>
</dbReference>
<dbReference type="Gene3D" id="3.20.20.70">
    <property type="entry name" value="Aldolase class I"/>
    <property type="match status" value="1"/>
</dbReference>
<dbReference type="HAMAP" id="MF_01225_B">
    <property type="entry name" value="MoaA_B"/>
    <property type="match status" value="1"/>
</dbReference>
<dbReference type="InterPro" id="IPR013785">
    <property type="entry name" value="Aldolase_TIM"/>
</dbReference>
<dbReference type="InterPro" id="IPR006638">
    <property type="entry name" value="Elp3/MiaA/NifB-like_rSAM"/>
</dbReference>
<dbReference type="InterPro" id="IPR013483">
    <property type="entry name" value="MoaA"/>
</dbReference>
<dbReference type="InterPro" id="IPR000385">
    <property type="entry name" value="MoaA_NifB_PqqE_Fe-S-bd_CS"/>
</dbReference>
<dbReference type="InterPro" id="IPR010505">
    <property type="entry name" value="MoaA_twitch"/>
</dbReference>
<dbReference type="InterPro" id="IPR050105">
    <property type="entry name" value="MoCo_biosynth_MoaA/MoaC"/>
</dbReference>
<dbReference type="InterPro" id="IPR007197">
    <property type="entry name" value="rSAM"/>
</dbReference>
<dbReference type="NCBIfam" id="TIGR02666">
    <property type="entry name" value="moaA"/>
    <property type="match status" value="1"/>
</dbReference>
<dbReference type="PANTHER" id="PTHR22960:SF0">
    <property type="entry name" value="MOLYBDENUM COFACTOR BIOSYNTHESIS PROTEIN 1"/>
    <property type="match status" value="1"/>
</dbReference>
<dbReference type="PANTHER" id="PTHR22960">
    <property type="entry name" value="MOLYBDOPTERIN COFACTOR SYNTHESIS PROTEIN A"/>
    <property type="match status" value="1"/>
</dbReference>
<dbReference type="Pfam" id="PF06463">
    <property type="entry name" value="Mob_synth_C"/>
    <property type="match status" value="1"/>
</dbReference>
<dbReference type="Pfam" id="PF04055">
    <property type="entry name" value="Radical_SAM"/>
    <property type="match status" value="1"/>
</dbReference>
<dbReference type="SFLD" id="SFLDG01383">
    <property type="entry name" value="cyclic_pyranopterin_phosphate"/>
    <property type="match status" value="1"/>
</dbReference>
<dbReference type="SFLD" id="SFLDG01072">
    <property type="entry name" value="dehydrogenase_like"/>
    <property type="match status" value="1"/>
</dbReference>
<dbReference type="SMART" id="SM00729">
    <property type="entry name" value="Elp3"/>
    <property type="match status" value="1"/>
</dbReference>
<dbReference type="SUPFAM" id="SSF102114">
    <property type="entry name" value="Radical SAM enzymes"/>
    <property type="match status" value="1"/>
</dbReference>
<dbReference type="PROSITE" id="PS01305">
    <property type="entry name" value="MOAA_NIFB_PQQE"/>
    <property type="match status" value="1"/>
</dbReference>
<dbReference type="PROSITE" id="PS51918">
    <property type="entry name" value="RADICAL_SAM"/>
    <property type="match status" value="1"/>
</dbReference>
<organism>
    <name type="scientific">Corynebacterium glutamicum (strain R)</name>
    <dbReference type="NCBI Taxonomy" id="340322"/>
    <lineage>
        <taxon>Bacteria</taxon>
        <taxon>Bacillati</taxon>
        <taxon>Actinomycetota</taxon>
        <taxon>Actinomycetes</taxon>
        <taxon>Mycobacteriales</taxon>
        <taxon>Corynebacteriaceae</taxon>
        <taxon>Corynebacterium</taxon>
    </lineage>
</organism>
<name>MOAA_CORGB</name>
<protein>
    <recommendedName>
        <fullName evidence="1">GTP 3',8-cyclase</fullName>
        <ecNumber evidence="1">4.1.99.22</ecNumber>
    </recommendedName>
    <alternativeName>
        <fullName evidence="1">Molybdenum cofactor biosynthesis protein A</fullName>
    </alternativeName>
</protein>
<reference key="1">
    <citation type="journal article" date="2007" name="Microbiology">
        <title>Comparative analysis of the Corynebacterium glutamicum group and complete genome sequence of strain R.</title>
        <authorList>
            <person name="Yukawa H."/>
            <person name="Omumasaba C.A."/>
            <person name="Nonaka H."/>
            <person name="Kos P."/>
            <person name="Okai N."/>
            <person name="Suzuki N."/>
            <person name="Suda M."/>
            <person name="Tsuge Y."/>
            <person name="Watanabe J."/>
            <person name="Ikeda Y."/>
            <person name="Vertes A.A."/>
            <person name="Inui M."/>
        </authorList>
    </citation>
    <scope>NUCLEOTIDE SEQUENCE [LARGE SCALE GENOMIC DNA]</scope>
    <source>
        <strain>R</strain>
    </source>
</reference>
<sequence length="377" mass="41201">MTTRLYLSPTPPRNDREGASKSTSASIKHDAYLPPADGNRVLVDRFGRIARDLRVSLTDRCNLRCTYCMPAEGLEWLPTEQTLNDAEVLRLLHIAVVKLGIRQIRFTGGEPLLRKNLEDIIAGTAALRTDEGEKVHIALTTNGLGLDKRIAGLKEAGLDRVNISLDTIDAERYVSLTRRDRLSGVLASIDAAVAAGLHPVKINAVVMPGVNEVDIVPLAEYCISKGAQLRFIEQMPLGPREQWKRGDMVTAEEILARLEEKFTLSPAKEPRGAAPAALWNAVDKSNPVITGQIGIIASVTHPFCGDCDRSRLTTDGTIRNCLFSRTETPLRDALRDGASDDELAQLWAGAMWEKKPGHGIDDEGFLQPDRPMSAIGG</sequence>
<proteinExistence type="inferred from homology"/>
<accession>A4QDF8</accession>